<proteinExistence type="inferred from homology"/>
<accession>Q1R2Z4</accession>
<reference key="1">
    <citation type="journal article" date="2006" name="Proc. Natl. Acad. Sci. U.S.A.">
        <title>Identification of genes subject to positive selection in uropathogenic strains of Escherichia coli: a comparative genomics approach.</title>
        <authorList>
            <person name="Chen S.L."/>
            <person name="Hung C.-S."/>
            <person name="Xu J."/>
            <person name="Reigstad C.S."/>
            <person name="Magrini V."/>
            <person name="Sabo A."/>
            <person name="Blasiar D."/>
            <person name="Bieri T."/>
            <person name="Meyer R.R."/>
            <person name="Ozersky P."/>
            <person name="Armstrong J.R."/>
            <person name="Fulton R.S."/>
            <person name="Latreille J.P."/>
            <person name="Spieth J."/>
            <person name="Hooton T.M."/>
            <person name="Mardis E.R."/>
            <person name="Hultgren S.J."/>
            <person name="Gordon J.I."/>
        </authorList>
    </citation>
    <scope>NUCLEOTIDE SEQUENCE [LARGE SCALE GENOMIC DNA]</scope>
    <source>
        <strain>UTI89 / UPEC</strain>
    </source>
</reference>
<sequence length="503" mass="54880">MEFSVKSGSPEKQRSACIVVGVFEPRRLSPIAEQLDKISDGYISALLRRGELEGKPGQTLLLHHVPNVLSERILLIGCGKERELDERQYKQVIQKTINTLNDTGSMEAVCFLTELHVKGRNNYWKVRQAVETAKETLYSFDQLKTNKSEPRRPLRKMVFNVPTRRELTSGERAIQHGLAIAAGIKAAKDLGNMPPNICNAAYLASQARQLADSYSKNVITRVIGEQQMKELGMHSYLAVGQGSQNESLMSVIEYKGNASEDARPIVLVGKGLTFDSGGISIKPSEGMDEMKYDMCGAAAVYGVMRMVAELQLPINVIGVLAGCENMPGGRAYRPGDVLTTMSGQTVEVLNTDAEGRLVLCDVLTYVERFEPEAVIDVATLTGACVIALGHHITGLMANHNPLAHELIAASEQSGDRAWRLPLGDEYQEQLESNFADMANIGGRPGGAITAGCFLSRFTRKYNWAHLDIAGTAWRSGKAKGATGRPVALLAQFLLNRAGFNGEE</sequence>
<gene>
    <name evidence="1" type="primary">pepA</name>
    <name type="ordered locus">UTI89_C4866</name>
</gene>
<protein>
    <recommendedName>
        <fullName evidence="1">Probable cytosol aminopeptidase</fullName>
        <ecNumber evidence="1">3.4.11.1</ecNumber>
    </recommendedName>
    <alternativeName>
        <fullName evidence="1">Leucine aminopeptidase</fullName>
        <shortName evidence="1">LAP</shortName>
        <ecNumber evidence="1">3.4.11.10</ecNumber>
    </alternativeName>
    <alternativeName>
        <fullName evidence="1">Leucyl aminopeptidase</fullName>
    </alternativeName>
</protein>
<evidence type="ECO:0000255" key="1">
    <source>
        <dbReference type="HAMAP-Rule" id="MF_00181"/>
    </source>
</evidence>
<feature type="chain" id="PRO_1000019916" description="Probable cytosol aminopeptidase">
    <location>
        <begin position="1"/>
        <end position="503"/>
    </location>
</feature>
<feature type="active site" evidence="1">
    <location>
        <position position="282"/>
    </location>
</feature>
<feature type="active site" evidence="1">
    <location>
        <position position="356"/>
    </location>
</feature>
<feature type="binding site" evidence="1">
    <location>
        <position position="270"/>
    </location>
    <ligand>
        <name>Mn(2+)</name>
        <dbReference type="ChEBI" id="CHEBI:29035"/>
        <label>2</label>
    </ligand>
</feature>
<feature type="binding site" evidence="1">
    <location>
        <position position="275"/>
    </location>
    <ligand>
        <name>Mn(2+)</name>
        <dbReference type="ChEBI" id="CHEBI:29035"/>
        <label>1</label>
    </ligand>
</feature>
<feature type="binding site" evidence="1">
    <location>
        <position position="275"/>
    </location>
    <ligand>
        <name>Mn(2+)</name>
        <dbReference type="ChEBI" id="CHEBI:29035"/>
        <label>2</label>
    </ligand>
</feature>
<feature type="binding site" evidence="1">
    <location>
        <position position="293"/>
    </location>
    <ligand>
        <name>Mn(2+)</name>
        <dbReference type="ChEBI" id="CHEBI:29035"/>
        <label>2</label>
    </ligand>
</feature>
<feature type="binding site" evidence="1">
    <location>
        <position position="352"/>
    </location>
    <ligand>
        <name>Mn(2+)</name>
        <dbReference type="ChEBI" id="CHEBI:29035"/>
        <label>1</label>
    </ligand>
</feature>
<feature type="binding site" evidence="1">
    <location>
        <position position="354"/>
    </location>
    <ligand>
        <name>Mn(2+)</name>
        <dbReference type="ChEBI" id="CHEBI:29035"/>
        <label>1</label>
    </ligand>
</feature>
<feature type="binding site" evidence="1">
    <location>
        <position position="354"/>
    </location>
    <ligand>
        <name>Mn(2+)</name>
        <dbReference type="ChEBI" id="CHEBI:29035"/>
        <label>2</label>
    </ligand>
</feature>
<organism>
    <name type="scientific">Escherichia coli (strain UTI89 / UPEC)</name>
    <dbReference type="NCBI Taxonomy" id="364106"/>
    <lineage>
        <taxon>Bacteria</taxon>
        <taxon>Pseudomonadati</taxon>
        <taxon>Pseudomonadota</taxon>
        <taxon>Gammaproteobacteria</taxon>
        <taxon>Enterobacterales</taxon>
        <taxon>Enterobacteriaceae</taxon>
        <taxon>Escherichia</taxon>
    </lineage>
</organism>
<comment type="function">
    <text evidence="1">Presumably involved in the processing and regular turnover of intracellular proteins. Catalyzes the removal of unsubstituted N-terminal amino acids from various peptides.</text>
</comment>
<comment type="catalytic activity">
    <reaction evidence="1">
        <text>Release of an N-terminal amino acid, Xaa-|-Yaa-, in which Xaa is preferably Leu, but may be other amino acids including Pro although not Arg or Lys, and Yaa may be Pro. Amino acid amides and methyl esters are also readily hydrolyzed, but rates on arylamides are exceedingly low.</text>
        <dbReference type="EC" id="3.4.11.1"/>
    </reaction>
</comment>
<comment type="catalytic activity">
    <reaction evidence="1">
        <text>Release of an N-terminal amino acid, preferentially leucine, but not glutamic or aspartic acids.</text>
        <dbReference type="EC" id="3.4.11.10"/>
    </reaction>
</comment>
<comment type="cofactor">
    <cofactor evidence="1">
        <name>Mn(2+)</name>
        <dbReference type="ChEBI" id="CHEBI:29035"/>
    </cofactor>
    <text evidence="1">Binds 2 manganese ions per subunit.</text>
</comment>
<comment type="subcellular location">
    <subcellularLocation>
        <location evidence="1">Cytoplasm</location>
    </subcellularLocation>
</comment>
<comment type="similarity">
    <text evidence="1">Belongs to the peptidase M17 family.</text>
</comment>
<keyword id="KW-0031">Aminopeptidase</keyword>
<keyword id="KW-0963">Cytoplasm</keyword>
<keyword id="KW-0378">Hydrolase</keyword>
<keyword id="KW-0464">Manganese</keyword>
<keyword id="KW-0479">Metal-binding</keyword>
<keyword id="KW-0645">Protease</keyword>
<dbReference type="EC" id="3.4.11.1" evidence="1"/>
<dbReference type="EC" id="3.4.11.10" evidence="1"/>
<dbReference type="EMBL" id="CP000243">
    <property type="protein sequence ID" value="ABE10270.1"/>
    <property type="molecule type" value="Genomic_DNA"/>
</dbReference>
<dbReference type="RefSeq" id="WP_000397144.1">
    <property type="nucleotide sequence ID" value="NZ_CP064825.1"/>
</dbReference>
<dbReference type="SMR" id="Q1R2Z4"/>
<dbReference type="MEROPS" id="M17.003"/>
<dbReference type="GeneID" id="93777558"/>
<dbReference type="KEGG" id="eci:UTI89_C4866"/>
<dbReference type="HOGENOM" id="CLU_013734_2_2_6"/>
<dbReference type="Proteomes" id="UP000001952">
    <property type="component" value="Chromosome"/>
</dbReference>
<dbReference type="GO" id="GO:0005737">
    <property type="term" value="C:cytoplasm"/>
    <property type="evidence" value="ECO:0007669"/>
    <property type="project" value="UniProtKB-SubCell"/>
</dbReference>
<dbReference type="GO" id="GO:0030145">
    <property type="term" value="F:manganese ion binding"/>
    <property type="evidence" value="ECO:0007669"/>
    <property type="project" value="UniProtKB-UniRule"/>
</dbReference>
<dbReference type="GO" id="GO:0070006">
    <property type="term" value="F:metalloaminopeptidase activity"/>
    <property type="evidence" value="ECO:0007669"/>
    <property type="project" value="InterPro"/>
</dbReference>
<dbReference type="GO" id="GO:0006508">
    <property type="term" value="P:proteolysis"/>
    <property type="evidence" value="ECO:0007669"/>
    <property type="project" value="UniProtKB-KW"/>
</dbReference>
<dbReference type="CDD" id="cd00433">
    <property type="entry name" value="Peptidase_M17"/>
    <property type="match status" value="1"/>
</dbReference>
<dbReference type="FunFam" id="3.40.220.10:FF:000001">
    <property type="entry name" value="Probable cytosol aminopeptidase"/>
    <property type="match status" value="1"/>
</dbReference>
<dbReference type="FunFam" id="3.40.630.10:FF:000004">
    <property type="entry name" value="Probable cytosol aminopeptidase"/>
    <property type="match status" value="1"/>
</dbReference>
<dbReference type="Gene3D" id="3.40.220.10">
    <property type="entry name" value="Leucine Aminopeptidase, subunit E, domain 1"/>
    <property type="match status" value="1"/>
</dbReference>
<dbReference type="Gene3D" id="3.40.630.10">
    <property type="entry name" value="Zn peptidases"/>
    <property type="match status" value="1"/>
</dbReference>
<dbReference type="HAMAP" id="MF_00181">
    <property type="entry name" value="Cytosol_peptidase_M17"/>
    <property type="match status" value="1"/>
</dbReference>
<dbReference type="InterPro" id="IPR011356">
    <property type="entry name" value="Leucine_aapep/pepB"/>
</dbReference>
<dbReference type="InterPro" id="IPR043472">
    <property type="entry name" value="Macro_dom-like"/>
</dbReference>
<dbReference type="InterPro" id="IPR000819">
    <property type="entry name" value="Peptidase_M17_C"/>
</dbReference>
<dbReference type="InterPro" id="IPR023042">
    <property type="entry name" value="Peptidase_M17_leu_NH2_pept"/>
</dbReference>
<dbReference type="InterPro" id="IPR008283">
    <property type="entry name" value="Peptidase_M17_N"/>
</dbReference>
<dbReference type="NCBIfam" id="NF002072">
    <property type="entry name" value="PRK00913.1-1"/>
    <property type="match status" value="1"/>
</dbReference>
<dbReference type="NCBIfam" id="NF002073">
    <property type="entry name" value="PRK00913.1-2"/>
    <property type="match status" value="1"/>
</dbReference>
<dbReference type="NCBIfam" id="NF002074">
    <property type="entry name" value="PRK00913.1-4"/>
    <property type="match status" value="1"/>
</dbReference>
<dbReference type="PANTHER" id="PTHR11963:SF23">
    <property type="entry name" value="CYTOSOL AMINOPEPTIDASE"/>
    <property type="match status" value="1"/>
</dbReference>
<dbReference type="PANTHER" id="PTHR11963">
    <property type="entry name" value="LEUCINE AMINOPEPTIDASE-RELATED"/>
    <property type="match status" value="1"/>
</dbReference>
<dbReference type="Pfam" id="PF00883">
    <property type="entry name" value="Peptidase_M17"/>
    <property type="match status" value="1"/>
</dbReference>
<dbReference type="Pfam" id="PF02789">
    <property type="entry name" value="Peptidase_M17_N"/>
    <property type="match status" value="1"/>
</dbReference>
<dbReference type="PRINTS" id="PR00481">
    <property type="entry name" value="LAMNOPPTDASE"/>
</dbReference>
<dbReference type="SUPFAM" id="SSF52949">
    <property type="entry name" value="Macro domain-like"/>
    <property type="match status" value="1"/>
</dbReference>
<dbReference type="SUPFAM" id="SSF53187">
    <property type="entry name" value="Zn-dependent exopeptidases"/>
    <property type="match status" value="1"/>
</dbReference>
<dbReference type="PROSITE" id="PS00631">
    <property type="entry name" value="CYTOSOL_AP"/>
    <property type="match status" value="1"/>
</dbReference>
<name>AMPA_ECOUT</name>